<sequence length="396" mass="42806">MSQLKLNPYFGEYGGMYVPQILVPALKQLENAFVEAQADESFQAEFTDLLKNYAGRPTALTLTRNLSPNPMVKIYLKREDLLHGGAHKTNQVLGQALLAKRMGKKEIIAETGAGQHGVATALACALLGLKCKVYMGAKDVARQSPNVFRMRLMGAEVIPVTSGSATLKDACNEAMRDWSGSYEKAHYLLGTAAGPHPFPTIVREFQRMIGEETKKQMLEREGRLPDAVIACVGGGSNAIGMFADFIDETSVELIGVEPAGKGIDTHMHGAPLKHGKTGIFFGMKAPLMQDSEGQIEESYSISAGLDFPSVGPQHAHLNAIGRARYESATDDEALEAFQLLARSEGIIPALESAHALAYALRLAKECTKETILVVNLSGRGDKDIFTVSDILNGKEE</sequence>
<gene>
    <name evidence="1" type="primary">trpB</name>
    <name type="ordered locus">Shewmr4_1458</name>
</gene>
<accession>Q0HK81</accession>
<comment type="function">
    <text evidence="1">The beta subunit is responsible for the synthesis of L-tryptophan from indole and L-serine.</text>
</comment>
<comment type="catalytic activity">
    <reaction evidence="1">
        <text>(1S,2R)-1-C-(indol-3-yl)glycerol 3-phosphate + L-serine = D-glyceraldehyde 3-phosphate + L-tryptophan + H2O</text>
        <dbReference type="Rhea" id="RHEA:10532"/>
        <dbReference type="ChEBI" id="CHEBI:15377"/>
        <dbReference type="ChEBI" id="CHEBI:33384"/>
        <dbReference type="ChEBI" id="CHEBI:57912"/>
        <dbReference type="ChEBI" id="CHEBI:58866"/>
        <dbReference type="ChEBI" id="CHEBI:59776"/>
        <dbReference type="EC" id="4.2.1.20"/>
    </reaction>
</comment>
<comment type="cofactor">
    <cofactor evidence="1">
        <name>pyridoxal 5'-phosphate</name>
        <dbReference type="ChEBI" id="CHEBI:597326"/>
    </cofactor>
</comment>
<comment type="pathway">
    <text evidence="1">Amino-acid biosynthesis; L-tryptophan biosynthesis; L-tryptophan from chorismate: step 5/5.</text>
</comment>
<comment type="subunit">
    <text evidence="1">Tetramer of two alpha and two beta chains.</text>
</comment>
<comment type="similarity">
    <text evidence="1">Belongs to the TrpB family.</text>
</comment>
<feature type="chain" id="PRO_1000018393" description="Tryptophan synthase beta chain">
    <location>
        <begin position="1"/>
        <end position="396"/>
    </location>
</feature>
<feature type="modified residue" description="N6-(pyridoxal phosphate)lysine" evidence="1">
    <location>
        <position position="88"/>
    </location>
</feature>
<name>TRPB_SHESM</name>
<reference key="1">
    <citation type="submission" date="2006-08" db="EMBL/GenBank/DDBJ databases">
        <title>Complete sequence of Shewanella sp. MR-4.</title>
        <authorList>
            <consortium name="US DOE Joint Genome Institute"/>
            <person name="Copeland A."/>
            <person name="Lucas S."/>
            <person name="Lapidus A."/>
            <person name="Barry K."/>
            <person name="Detter J.C."/>
            <person name="Glavina del Rio T."/>
            <person name="Hammon N."/>
            <person name="Israni S."/>
            <person name="Dalin E."/>
            <person name="Tice H."/>
            <person name="Pitluck S."/>
            <person name="Kiss H."/>
            <person name="Brettin T."/>
            <person name="Bruce D."/>
            <person name="Han C."/>
            <person name="Tapia R."/>
            <person name="Gilna P."/>
            <person name="Schmutz J."/>
            <person name="Larimer F."/>
            <person name="Land M."/>
            <person name="Hauser L."/>
            <person name="Kyrpides N."/>
            <person name="Mikhailova N."/>
            <person name="Nealson K."/>
            <person name="Konstantinidis K."/>
            <person name="Klappenbach J."/>
            <person name="Tiedje J."/>
            <person name="Richardson P."/>
        </authorList>
    </citation>
    <scope>NUCLEOTIDE SEQUENCE [LARGE SCALE GENOMIC DNA]</scope>
    <source>
        <strain>MR-4</strain>
    </source>
</reference>
<protein>
    <recommendedName>
        <fullName evidence="1">Tryptophan synthase beta chain</fullName>
        <ecNumber evidence="1">4.2.1.20</ecNumber>
    </recommendedName>
</protein>
<organism>
    <name type="scientific">Shewanella sp. (strain MR-4)</name>
    <dbReference type="NCBI Taxonomy" id="60480"/>
    <lineage>
        <taxon>Bacteria</taxon>
        <taxon>Pseudomonadati</taxon>
        <taxon>Pseudomonadota</taxon>
        <taxon>Gammaproteobacteria</taxon>
        <taxon>Alteromonadales</taxon>
        <taxon>Shewanellaceae</taxon>
        <taxon>Shewanella</taxon>
    </lineage>
</organism>
<keyword id="KW-0028">Amino-acid biosynthesis</keyword>
<keyword id="KW-0057">Aromatic amino acid biosynthesis</keyword>
<keyword id="KW-0456">Lyase</keyword>
<keyword id="KW-0663">Pyridoxal phosphate</keyword>
<keyword id="KW-0822">Tryptophan biosynthesis</keyword>
<proteinExistence type="inferred from homology"/>
<evidence type="ECO:0000255" key="1">
    <source>
        <dbReference type="HAMAP-Rule" id="MF_00133"/>
    </source>
</evidence>
<dbReference type="EC" id="4.2.1.20" evidence="1"/>
<dbReference type="EMBL" id="CP000446">
    <property type="protein sequence ID" value="ABI38536.1"/>
    <property type="molecule type" value="Genomic_DNA"/>
</dbReference>
<dbReference type="RefSeq" id="WP_011622240.1">
    <property type="nucleotide sequence ID" value="NC_008321.1"/>
</dbReference>
<dbReference type="SMR" id="Q0HK81"/>
<dbReference type="KEGG" id="she:Shewmr4_1458"/>
<dbReference type="HOGENOM" id="CLU_016734_3_1_6"/>
<dbReference type="UniPathway" id="UPA00035">
    <property type="reaction ID" value="UER00044"/>
</dbReference>
<dbReference type="GO" id="GO:0005737">
    <property type="term" value="C:cytoplasm"/>
    <property type="evidence" value="ECO:0007669"/>
    <property type="project" value="TreeGrafter"/>
</dbReference>
<dbReference type="GO" id="GO:0004834">
    <property type="term" value="F:tryptophan synthase activity"/>
    <property type="evidence" value="ECO:0007669"/>
    <property type="project" value="UniProtKB-UniRule"/>
</dbReference>
<dbReference type="CDD" id="cd06446">
    <property type="entry name" value="Trp-synth_B"/>
    <property type="match status" value="1"/>
</dbReference>
<dbReference type="FunFam" id="3.40.50.1100:FF:000001">
    <property type="entry name" value="Tryptophan synthase beta chain"/>
    <property type="match status" value="1"/>
</dbReference>
<dbReference type="FunFam" id="3.40.50.1100:FF:000004">
    <property type="entry name" value="Tryptophan synthase beta chain"/>
    <property type="match status" value="1"/>
</dbReference>
<dbReference type="Gene3D" id="3.40.50.1100">
    <property type="match status" value="2"/>
</dbReference>
<dbReference type="HAMAP" id="MF_00133">
    <property type="entry name" value="Trp_synth_beta"/>
    <property type="match status" value="1"/>
</dbReference>
<dbReference type="InterPro" id="IPR006653">
    <property type="entry name" value="Trp_synth_b_CS"/>
</dbReference>
<dbReference type="InterPro" id="IPR006654">
    <property type="entry name" value="Trp_synth_beta"/>
</dbReference>
<dbReference type="InterPro" id="IPR023026">
    <property type="entry name" value="Trp_synth_beta/beta-like"/>
</dbReference>
<dbReference type="InterPro" id="IPR001926">
    <property type="entry name" value="TrpB-like_PALP"/>
</dbReference>
<dbReference type="InterPro" id="IPR036052">
    <property type="entry name" value="TrpB-like_PALP_sf"/>
</dbReference>
<dbReference type="NCBIfam" id="TIGR00263">
    <property type="entry name" value="trpB"/>
    <property type="match status" value="1"/>
</dbReference>
<dbReference type="PANTHER" id="PTHR48077:SF3">
    <property type="entry name" value="TRYPTOPHAN SYNTHASE"/>
    <property type="match status" value="1"/>
</dbReference>
<dbReference type="PANTHER" id="PTHR48077">
    <property type="entry name" value="TRYPTOPHAN SYNTHASE-RELATED"/>
    <property type="match status" value="1"/>
</dbReference>
<dbReference type="Pfam" id="PF00291">
    <property type="entry name" value="PALP"/>
    <property type="match status" value="1"/>
</dbReference>
<dbReference type="PIRSF" id="PIRSF001413">
    <property type="entry name" value="Trp_syn_beta"/>
    <property type="match status" value="1"/>
</dbReference>
<dbReference type="SUPFAM" id="SSF53686">
    <property type="entry name" value="Tryptophan synthase beta subunit-like PLP-dependent enzymes"/>
    <property type="match status" value="1"/>
</dbReference>
<dbReference type="PROSITE" id="PS00168">
    <property type="entry name" value="TRP_SYNTHASE_BETA"/>
    <property type="match status" value="1"/>
</dbReference>